<gene>
    <name type="ordered locus">Oant_1245</name>
</gene>
<dbReference type="EMBL" id="CP000758">
    <property type="protein sequence ID" value="ABS13962.1"/>
    <property type="molecule type" value="Genomic_DNA"/>
</dbReference>
<dbReference type="RefSeq" id="WP_006473348.1">
    <property type="nucleotide sequence ID" value="NC_009667.1"/>
</dbReference>
<dbReference type="STRING" id="439375.Oant_1245"/>
<dbReference type="KEGG" id="oan:Oant_1245"/>
<dbReference type="eggNOG" id="COG5487">
    <property type="taxonomic scope" value="Bacteria"/>
</dbReference>
<dbReference type="HOGENOM" id="CLU_187346_1_0_5"/>
<dbReference type="Proteomes" id="UP000002301">
    <property type="component" value="Chromosome 1"/>
</dbReference>
<dbReference type="GO" id="GO:0005886">
    <property type="term" value="C:plasma membrane"/>
    <property type="evidence" value="ECO:0007669"/>
    <property type="project" value="UniProtKB-SubCell"/>
</dbReference>
<dbReference type="HAMAP" id="MF_01361">
    <property type="entry name" value="UPF0391"/>
    <property type="match status" value="1"/>
</dbReference>
<dbReference type="InterPro" id="IPR009760">
    <property type="entry name" value="DUF1328"/>
</dbReference>
<dbReference type="NCBIfam" id="NF010226">
    <property type="entry name" value="PRK13682.1-1"/>
    <property type="match status" value="1"/>
</dbReference>
<dbReference type="NCBIfam" id="NF010228">
    <property type="entry name" value="PRK13682.1-3"/>
    <property type="match status" value="1"/>
</dbReference>
<dbReference type="NCBIfam" id="NF010229">
    <property type="entry name" value="PRK13682.1-4"/>
    <property type="match status" value="1"/>
</dbReference>
<dbReference type="Pfam" id="PF07043">
    <property type="entry name" value="DUF1328"/>
    <property type="match status" value="1"/>
</dbReference>
<dbReference type="PIRSF" id="PIRSF036466">
    <property type="entry name" value="UCP036466"/>
    <property type="match status" value="1"/>
</dbReference>
<proteinExistence type="inferred from homology"/>
<name>Y1245_BRUA4</name>
<evidence type="ECO:0000255" key="1">
    <source>
        <dbReference type="HAMAP-Rule" id="MF_01361"/>
    </source>
</evidence>
<feature type="chain" id="PRO_0000314227" description="UPF0391 membrane protein Oant_1245">
    <location>
        <begin position="1"/>
        <end position="54"/>
    </location>
</feature>
<feature type="transmembrane region" description="Helical" evidence="1">
    <location>
        <begin position="5"/>
        <end position="25"/>
    </location>
</feature>
<feature type="transmembrane region" description="Helical" evidence="1">
    <location>
        <begin position="29"/>
        <end position="48"/>
    </location>
</feature>
<sequence length="54" mass="5486">MLYYALVFLVVALVAGALGFGGIAGASAGIAQILFFVFLALLVISLIASAIRKA</sequence>
<keyword id="KW-1003">Cell membrane</keyword>
<keyword id="KW-0472">Membrane</keyword>
<keyword id="KW-1185">Reference proteome</keyword>
<keyword id="KW-0812">Transmembrane</keyword>
<keyword id="KW-1133">Transmembrane helix</keyword>
<comment type="subcellular location">
    <subcellularLocation>
        <location evidence="1">Cell membrane</location>
        <topology evidence="1">Multi-pass membrane protein</topology>
    </subcellularLocation>
</comment>
<comment type="similarity">
    <text evidence="1">Belongs to the UPF0391 family.</text>
</comment>
<protein>
    <recommendedName>
        <fullName evidence="1">UPF0391 membrane protein Oant_1245</fullName>
    </recommendedName>
</protein>
<accession>A6WYA8</accession>
<reference key="1">
    <citation type="journal article" date="2011" name="J. Bacteriol.">
        <title>Genome of Ochrobactrum anthropi ATCC 49188 T, a versatile opportunistic pathogen and symbiont of several eukaryotic hosts.</title>
        <authorList>
            <person name="Chain P.S."/>
            <person name="Lang D.M."/>
            <person name="Comerci D.J."/>
            <person name="Malfatti S.A."/>
            <person name="Vergez L.M."/>
            <person name="Shin M."/>
            <person name="Ugalde R.A."/>
            <person name="Garcia E."/>
            <person name="Tolmasky M.E."/>
        </authorList>
    </citation>
    <scope>NUCLEOTIDE SEQUENCE [LARGE SCALE GENOMIC DNA]</scope>
    <source>
        <strain>ATCC 49188 / DSM 6882 / CCUG 24695 / JCM 21032 / LMG 3331 / NBRC 15819 / NCTC 12168 / Alc 37</strain>
    </source>
</reference>
<organism>
    <name type="scientific">Brucella anthropi (strain ATCC 49188 / DSM 6882 / CCUG 24695 / JCM 21032 / LMG 3331 / NBRC 15819 / NCTC 12168 / Alc 37)</name>
    <name type="common">Ochrobactrum anthropi</name>
    <dbReference type="NCBI Taxonomy" id="439375"/>
    <lineage>
        <taxon>Bacteria</taxon>
        <taxon>Pseudomonadati</taxon>
        <taxon>Pseudomonadota</taxon>
        <taxon>Alphaproteobacteria</taxon>
        <taxon>Hyphomicrobiales</taxon>
        <taxon>Brucellaceae</taxon>
        <taxon>Brucella/Ochrobactrum group</taxon>
        <taxon>Brucella</taxon>
    </lineage>
</organism>